<dbReference type="EMBL" id="AM270359">
    <property type="protein sequence ID" value="CAK42798.1"/>
    <property type="molecule type" value="Genomic_DNA"/>
</dbReference>
<dbReference type="RefSeq" id="XP_001397494.1">
    <property type="nucleotide sequence ID" value="XM_001397457.1"/>
</dbReference>
<dbReference type="SMR" id="A2R702"/>
<dbReference type="EnsemblFungi" id="CAK42798">
    <property type="protein sequence ID" value="CAK42798"/>
    <property type="gene ID" value="An16g01810"/>
</dbReference>
<dbReference type="GeneID" id="4988574"/>
<dbReference type="KEGG" id="ang:An16g01810"/>
<dbReference type="VEuPathDB" id="FungiDB:An16g01810"/>
<dbReference type="HOGENOM" id="CLU_062828_2_1_1"/>
<dbReference type="Proteomes" id="UP000006706">
    <property type="component" value="Chromosome 5R"/>
</dbReference>
<dbReference type="GO" id="GO:0000791">
    <property type="term" value="C:euchromatin"/>
    <property type="evidence" value="ECO:0007669"/>
    <property type="project" value="EnsemblFungi"/>
</dbReference>
<dbReference type="GO" id="GO:0000786">
    <property type="term" value="C:nucleosome"/>
    <property type="evidence" value="ECO:0007669"/>
    <property type="project" value="UniProtKB-KW"/>
</dbReference>
<dbReference type="GO" id="GO:0005634">
    <property type="term" value="C:nucleus"/>
    <property type="evidence" value="ECO:0007669"/>
    <property type="project" value="UniProtKB-SubCell"/>
</dbReference>
<dbReference type="GO" id="GO:0031490">
    <property type="term" value="F:chromatin DNA binding"/>
    <property type="evidence" value="ECO:0007669"/>
    <property type="project" value="EnsemblFungi"/>
</dbReference>
<dbReference type="GO" id="GO:0042802">
    <property type="term" value="F:identical protein binding"/>
    <property type="evidence" value="ECO:0007669"/>
    <property type="project" value="EnsemblFungi"/>
</dbReference>
<dbReference type="GO" id="GO:0046982">
    <property type="term" value="F:protein heterodimerization activity"/>
    <property type="evidence" value="ECO:0007669"/>
    <property type="project" value="InterPro"/>
</dbReference>
<dbReference type="GO" id="GO:0000978">
    <property type="term" value="F:RNA polymerase II cis-regulatory region sequence-specific DNA binding"/>
    <property type="evidence" value="ECO:0007669"/>
    <property type="project" value="EnsemblFungi"/>
</dbReference>
<dbReference type="GO" id="GO:0030527">
    <property type="term" value="F:structural constituent of chromatin"/>
    <property type="evidence" value="ECO:0007669"/>
    <property type="project" value="InterPro"/>
</dbReference>
<dbReference type="GO" id="GO:0140898">
    <property type="term" value="P:CENP-A eviction from euchromatin"/>
    <property type="evidence" value="ECO:0007669"/>
    <property type="project" value="EnsemblFungi"/>
</dbReference>
<dbReference type="GO" id="GO:0070481">
    <property type="term" value="P:nuclear-transcribed mRNA catabolic process, non-stop decay"/>
    <property type="evidence" value="ECO:0007669"/>
    <property type="project" value="EnsemblFungi"/>
</dbReference>
<dbReference type="GO" id="GO:0006357">
    <property type="term" value="P:regulation of transcription by RNA polymerase II"/>
    <property type="evidence" value="ECO:0007669"/>
    <property type="project" value="EnsemblFungi"/>
</dbReference>
<dbReference type="GO" id="GO:0030466">
    <property type="term" value="P:silent mating-type cassette heterochromatin formation"/>
    <property type="evidence" value="ECO:0007669"/>
    <property type="project" value="EnsemblFungi"/>
</dbReference>
<dbReference type="GO" id="GO:0006368">
    <property type="term" value="P:transcription elongation by RNA polymerase II"/>
    <property type="evidence" value="ECO:0007669"/>
    <property type="project" value="EnsemblFungi"/>
</dbReference>
<dbReference type="CDD" id="cd00074">
    <property type="entry name" value="HFD_H2A"/>
    <property type="match status" value="1"/>
</dbReference>
<dbReference type="FunFam" id="1.10.20.10:FF:000021">
    <property type="entry name" value="Histone H2A"/>
    <property type="match status" value="1"/>
</dbReference>
<dbReference type="Gene3D" id="1.10.20.10">
    <property type="entry name" value="Histone, subunit A"/>
    <property type="match status" value="1"/>
</dbReference>
<dbReference type="InterPro" id="IPR009072">
    <property type="entry name" value="Histone-fold"/>
</dbReference>
<dbReference type="InterPro" id="IPR002119">
    <property type="entry name" value="Histone_H2A"/>
</dbReference>
<dbReference type="InterPro" id="IPR007125">
    <property type="entry name" value="Histone_H2A/H2B/H3"/>
</dbReference>
<dbReference type="InterPro" id="IPR032454">
    <property type="entry name" value="Histone_H2A_C"/>
</dbReference>
<dbReference type="PANTHER" id="PTHR23430">
    <property type="entry name" value="HISTONE H2A"/>
    <property type="match status" value="1"/>
</dbReference>
<dbReference type="Pfam" id="PF00125">
    <property type="entry name" value="Histone"/>
    <property type="match status" value="1"/>
</dbReference>
<dbReference type="Pfam" id="PF16211">
    <property type="entry name" value="Histone_H2A_C"/>
    <property type="match status" value="1"/>
</dbReference>
<dbReference type="PRINTS" id="PR00620">
    <property type="entry name" value="HISTONEH2A"/>
</dbReference>
<dbReference type="SMART" id="SM00414">
    <property type="entry name" value="H2A"/>
    <property type="match status" value="1"/>
</dbReference>
<dbReference type="SUPFAM" id="SSF47113">
    <property type="entry name" value="Histone-fold"/>
    <property type="match status" value="1"/>
</dbReference>
<feature type="chain" id="PRO_0000297718" description="Histone H2A.Z">
    <location>
        <begin position="1"/>
        <end position="138"/>
    </location>
</feature>
<feature type="region of interest" description="Disordered" evidence="2">
    <location>
        <begin position="1"/>
        <end position="32"/>
    </location>
</feature>
<feature type="compositionally biased region" description="Gly residues" evidence="2">
    <location>
        <begin position="1"/>
        <end position="13"/>
    </location>
</feature>
<feature type="modified residue" description="N6-acetyllysine" evidence="1">
    <location>
        <position position="5"/>
    </location>
</feature>
<feature type="modified residue" description="N6-acetyllysine" evidence="1">
    <location>
        <position position="12"/>
    </location>
</feature>
<keyword id="KW-0007">Acetylation</keyword>
<keyword id="KW-0158">Chromosome</keyword>
<keyword id="KW-0238">DNA-binding</keyword>
<keyword id="KW-0544">Nucleosome core</keyword>
<keyword id="KW-0539">Nucleus</keyword>
<keyword id="KW-1185">Reference proteome</keyword>
<proteinExistence type="inferred from homology"/>
<evidence type="ECO:0000250" key="1"/>
<evidence type="ECO:0000256" key="2">
    <source>
        <dbReference type="SAM" id="MobiDB-lite"/>
    </source>
</evidence>
<evidence type="ECO:0000305" key="3"/>
<organism>
    <name type="scientific">Aspergillus niger (strain ATCC MYA-4892 / CBS 513.88 / FGSC A1513)</name>
    <dbReference type="NCBI Taxonomy" id="425011"/>
    <lineage>
        <taxon>Eukaryota</taxon>
        <taxon>Fungi</taxon>
        <taxon>Dikarya</taxon>
        <taxon>Ascomycota</taxon>
        <taxon>Pezizomycotina</taxon>
        <taxon>Eurotiomycetes</taxon>
        <taxon>Eurotiomycetidae</taxon>
        <taxon>Eurotiales</taxon>
        <taxon>Aspergillaceae</taxon>
        <taxon>Aspergillus</taxon>
        <taxon>Aspergillus subgen. Circumdati</taxon>
    </lineage>
</organism>
<reference key="1">
    <citation type="journal article" date="2007" name="Nat. Biotechnol.">
        <title>Genome sequencing and analysis of the versatile cell factory Aspergillus niger CBS 513.88.</title>
        <authorList>
            <person name="Pel H.J."/>
            <person name="de Winde J.H."/>
            <person name="Archer D.B."/>
            <person name="Dyer P.S."/>
            <person name="Hofmann G."/>
            <person name="Schaap P.J."/>
            <person name="Turner G."/>
            <person name="de Vries R.P."/>
            <person name="Albang R."/>
            <person name="Albermann K."/>
            <person name="Andersen M.R."/>
            <person name="Bendtsen J.D."/>
            <person name="Benen J.A.E."/>
            <person name="van den Berg M."/>
            <person name="Breestraat S."/>
            <person name="Caddick M.X."/>
            <person name="Contreras R."/>
            <person name="Cornell M."/>
            <person name="Coutinho P.M."/>
            <person name="Danchin E.G.J."/>
            <person name="Debets A.J.M."/>
            <person name="Dekker P."/>
            <person name="van Dijck P.W.M."/>
            <person name="van Dijk A."/>
            <person name="Dijkhuizen L."/>
            <person name="Driessen A.J.M."/>
            <person name="d'Enfert C."/>
            <person name="Geysens S."/>
            <person name="Goosen C."/>
            <person name="Groot G.S.P."/>
            <person name="de Groot P.W.J."/>
            <person name="Guillemette T."/>
            <person name="Henrissat B."/>
            <person name="Herweijer M."/>
            <person name="van den Hombergh J.P.T.W."/>
            <person name="van den Hondel C.A.M.J.J."/>
            <person name="van der Heijden R.T.J.M."/>
            <person name="van der Kaaij R.M."/>
            <person name="Klis F.M."/>
            <person name="Kools H.J."/>
            <person name="Kubicek C.P."/>
            <person name="van Kuyk P.A."/>
            <person name="Lauber J."/>
            <person name="Lu X."/>
            <person name="van der Maarel M.J.E.C."/>
            <person name="Meulenberg R."/>
            <person name="Menke H."/>
            <person name="Mortimer M.A."/>
            <person name="Nielsen J."/>
            <person name="Oliver S.G."/>
            <person name="Olsthoorn M."/>
            <person name="Pal K."/>
            <person name="van Peij N.N.M.E."/>
            <person name="Ram A.F.J."/>
            <person name="Rinas U."/>
            <person name="Roubos J.A."/>
            <person name="Sagt C.M.J."/>
            <person name="Schmoll M."/>
            <person name="Sun J."/>
            <person name="Ussery D."/>
            <person name="Varga J."/>
            <person name="Vervecken W."/>
            <person name="van de Vondervoort P.J.J."/>
            <person name="Wedler H."/>
            <person name="Woesten H.A.B."/>
            <person name="Zeng A.-P."/>
            <person name="van Ooyen A.J.J."/>
            <person name="Visser J."/>
            <person name="Stam H."/>
        </authorList>
    </citation>
    <scope>NUCLEOTIDE SEQUENCE [LARGE SCALE GENOMIC DNA]</scope>
    <source>
        <strain>ATCC MYA-4892 / CBS 513.88 / FGSC A1513</strain>
    </source>
</reference>
<comment type="function">
    <text evidence="1">Variant histone H2A which can replace H2A in some nucleosomes. Nucleosomes wrap and compact DNA into chromatin, limiting DNA accessibility to the cellular machineries which require DNA as a template. Histones thereby play a central role in transcription regulation, DNA repair, DNA replication and chromosomal stability. DNA accessibility is regulated via a complex set of post-translational modifications of histones, also called histone code, and nucleosome remodeling. This variant is enriched at promoters, it may keep them in a repressed state until the appropriate activation signal is received. Near telomeres, it may counteract gene silencing caused by the spread of heterochromatin proteins. Required for the RNA polymerase II and spt15/TBP recruitment to the target genes. Involved in chromosome stability (By similarity).</text>
</comment>
<comment type="subunit">
    <text evidence="1">The nucleosome is a histone octamer containing two molecules each of H2A, H2B, H3 and H4 assembled in one H3-H4 heterotetramer and two H2A-H2B heterodimers. The octamer wraps approximately 147 bp of DNA. H2A or its variant H2A.Z forms a heterodimer with H2B. H2A.Z associates with the vps72/swc2 subunit of the SWR1 chromatin remodeling complex. Also interacts with rbp1/DNA-directed RNA polymerase II largest subunit (By similarity).</text>
</comment>
<comment type="subcellular location">
    <subcellularLocation>
        <location evidence="1">Nucleus</location>
    </subcellularLocation>
    <subcellularLocation>
        <location evidence="1">Chromosome</location>
    </subcellularLocation>
</comment>
<comment type="PTM">
    <text evidence="1">Acetylated once deposited into chromatin.</text>
</comment>
<comment type="similarity">
    <text evidence="3">Belongs to the histone H2A family.</text>
</comment>
<sequence>MPGGKGKSIGGKAGSKDSAGKSQKSHSAKAGLQFPCGRVKRFLKNNTQNKMRVGAKAAVYVTAVLEYLTAEVLELAGNAAKDLKVKRITPRHLQLAIRGDEELDTLIRATIAFGGVLPRINRALLLKVEQKKKNKTEA</sequence>
<accession>A2R702</accession>
<name>H2AZ_ASPNC</name>
<gene>
    <name type="primary">HTZ1</name>
    <name type="ORF">An16g01810</name>
</gene>
<protein>
    <recommendedName>
        <fullName>Histone H2A.Z</fullName>
    </recommendedName>
</protein>